<dbReference type="EMBL" id="L28104">
    <property type="protein sequence ID" value="AAA25276.1"/>
    <property type="molecule type" value="Genomic_DNA"/>
</dbReference>
<dbReference type="RefSeq" id="WP_003728467.1">
    <property type="nucleotide sequence ID" value="NZ_WUEB01000010.1"/>
</dbReference>
<dbReference type="RefSeq" id="YP_003728019.1">
    <property type="nucleotide sequence ID" value="NC_014255.1"/>
</dbReference>
<dbReference type="SMR" id="Q56405"/>
<dbReference type="GeneID" id="93233421"/>
<dbReference type="PHI-base" id="PHI:11287"/>
<dbReference type="PHI-base" id="PHI:7387"/>
<dbReference type="GO" id="GO:0003677">
    <property type="term" value="F:DNA binding"/>
    <property type="evidence" value="ECO:0007669"/>
    <property type="project" value="UniProtKB-KW"/>
</dbReference>
<dbReference type="GO" id="GO:0003700">
    <property type="term" value="F:DNA-binding transcription factor activity"/>
    <property type="evidence" value="ECO:0007669"/>
    <property type="project" value="InterPro"/>
</dbReference>
<dbReference type="GO" id="GO:0046872">
    <property type="term" value="F:metal ion binding"/>
    <property type="evidence" value="ECO:0007669"/>
    <property type="project" value="UniProtKB-KW"/>
</dbReference>
<dbReference type="GO" id="GO:0046686">
    <property type="term" value="P:response to cadmium ion"/>
    <property type="evidence" value="ECO:0007669"/>
    <property type="project" value="UniProtKB-KW"/>
</dbReference>
<dbReference type="CDD" id="cd00090">
    <property type="entry name" value="HTH_ARSR"/>
    <property type="match status" value="1"/>
</dbReference>
<dbReference type="Gene3D" id="1.10.10.10">
    <property type="entry name" value="Winged helix-like DNA-binding domain superfamily/Winged helix DNA-binding domain"/>
    <property type="match status" value="1"/>
</dbReference>
<dbReference type="InterPro" id="IPR011991">
    <property type="entry name" value="ArsR-like_HTH"/>
</dbReference>
<dbReference type="InterPro" id="IPR018334">
    <property type="entry name" value="ArsR_HTH"/>
</dbReference>
<dbReference type="InterPro" id="IPR001845">
    <property type="entry name" value="HTH_ArsR_DNA-bd_dom"/>
</dbReference>
<dbReference type="InterPro" id="IPR051081">
    <property type="entry name" value="HTH_MetalResp_TranReg"/>
</dbReference>
<dbReference type="InterPro" id="IPR036388">
    <property type="entry name" value="WH-like_DNA-bd_sf"/>
</dbReference>
<dbReference type="InterPro" id="IPR036390">
    <property type="entry name" value="WH_DNA-bd_sf"/>
</dbReference>
<dbReference type="NCBIfam" id="NF033788">
    <property type="entry name" value="HTH_metalloreg"/>
    <property type="match status" value="1"/>
</dbReference>
<dbReference type="PANTHER" id="PTHR33154:SF18">
    <property type="entry name" value="ARSENICAL RESISTANCE OPERON REPRESSOR"/>
    <property type="match status" value="1"/>
</dbReference>
<dbReference type="PANTHER" id="PTHR33154">
    <property type="entry name" value="TRANSCRIPTIONAL REGULATOR, ARSR FAMILY"/>
    <property type="match status" value="1"/>
</dbReference>
<dbReference type="Pfam" id="PF01022">
    <property type="entry name" value="HTH_5"/>
    <property type="match status" value="1"/>
</dbReference>
<dbReference type="PRINTS" id="PR00778">
    <property type="entry name" value="HTHARSR"/>
</dbReference>
<dbReference type="SMART" id="SM00418">
    <property type="entry name" value="HTH_ARSR"/>
    <property type="match status" value="1"/>
</dbReference>
<dbReference type="SUPFAM" id="SSF46785">
    <property type="entry name" value="Winged helix' DNA-binding domain"/>
    <property type="match status" value="1"/>
</dbReference>
<dbReference type="PROSITE" id="PS00846">
    <property type="entry name" value="HTH_ARSR_1"/>
    <property type="match status" value="1"/>
</dbReference>
<dbReference type="PROSITE" id="PS50987">
    <property type="entry name" value="HTH_ARSR_2"/>
    <property type="match status" value="1"/>
</dbReference>
<keyword id="KW-0104">Cadmium</keyword>
<keyword id="KW-0105">Cadmium resistance</keyword>
<keyword id="KW-0238">DNA-binding</keyword>
<keyword id="KW-0479">Metal-binding</keyword>
<keyword id="KW-0614">Plasmid</keyword>
<keyword id="KW-0804">Transcription</keyword>
<keyword id="KW-0805">Transcription regulation</keyword>
<keyword id="KW-0814">Transposable element</keyword>
<geneLocation type="plasmid">
    <name>pLm74</name>
</geneLocation>
<gene>
    <name type="primary">cadC</name>
</gene>
<accession>Q56405</accession>
<reference key="1">
    <citation type="journal article" date="1994" name="J. Bacteriol.">
        <title>Plasmid-borne cadmium resistance genes in Listeria monocytogenes are similar to cadA and cadC of Staphylococcus aureus and are induced by cadmium.</title>
        <authorList>
            <person name="Lebrun M."/>
            <person name="Audurier A."/>
            <person name="Cossart P."/>
        </authorList>
    </citation>
    <scope>NUCLEOTIDE SEQUENCE [GENOMIC DNA]</scope>
    <source>
        <strain>LM74</strain>
    </source>
</reference>
<reference key="2">
    <citation type="journal article" date="1994" name="J. Bacteriol.">
        <title>Plasmid-borne cadmium resistance genes in Listeria monocytogenes are present on Tn5422, a novel transposon closely related to Tn917.</title>
        <authorList>
            <person name="Lebrun M."/>
            <person name="Audurier A."/>
            <person name="Cossart P."/>
        </authorList>
    </citation>
    <scope>NUCLEOTIDE SEQUENCE [GENOMIC DNA]</scope>
    <source>
        <strain>LM74</strain>
        <transposon>Tn5422</transposon>
    </source>
</reference>
<comment type="function">
    <text evidence="1">Metal-binding repressor for the cad operon. Involved in resistance to heavy metals, such as cadmium, bismuth, zinc or lead. Metal binding causes the repressor to dissociate from the DNA (By similarity).</text>
</comment>
<comment type="subunit">
    <text evidence="1">Homodimer.</text>
</comment>
<protein>
    <recommendedName>
        <fullName>Cadmium resistance transcriptional regulatory protein CadC</fullName>
    </recommendedName>
    <alternativeName>
        <fullName>Cadmium efflux system accessory protein</fullName>
    </alternativeName>
</protein>
<proteinExistence type="inferred from homology"/>
<evidence type="ECO:0000250" key="1"/>
<evidence type="ECO:0000255" key="2">
    <source>
        <dbReference type="PROSITE-ProRule" id="PRU00340"/>
    </source>
</evidence>
<organism>
    <name type="scientific">Listeria monocytogenes</name>
    <dbReference type="NCBI Taxonomy" id="1639"/>
    <lineage>
        <taxon>Bacteria</taxon>
        <taxon>Bacillati</taxon>
        <taxon>Bacillota</taxon>
        <taxon>Bacilli</taxon>
        <taxon>Bacillales</taxon>
        <taxon>Listeriaceae</taxon>
        <taxon>Listeria</taxon>
    </lineage>
</organism>
<feature type="chain" id="PRO_0000160619" description="Cadmium resistance transcriptional regulatory protein CadC">
    <location>
        <begin position="1"/>
        <end position="119"/>
    </location>
</feature>
<feature type="domain" description="HTH arsR-type" evidence="2">
    <location>
        <begin position="23"/>
        <end position="118"/>
    </location>
</feature>
<feature type="DNA-binding region" description="H-T-H motif" evidence="2">
    <location>
        <begin position="58"/>
        <end position="77"/>
    </location>
</feature>
<feature type="binding site" evidence="2">
    <location>
        <position position="6"/>
    </location>
    <ligand>
        <name>Cd(2+)</name>
        <dbReference type="ChEBI" id="CHEBI:48775"/>
        <note>ligand shared between dimeric partners</note>
    </ligand>
</feature>
<feature type="binding site" evidence="2">
    <location>
        <position position="10"/>
    </location>
    <ligand>
        <name>Cd(2+)</name>
        <dbReference type="ChEBI" id="CHEBI:48775"/>
        <note>ligand shared between dimeric partners</note>
    </ligand>
</feature>
<feature type="binding site" evidence="2">
    <location>
        <position position="57"/>
    </location>
    <ligand>
        <name>Cd(2+)</name>
        <dbReference type="ChEBI" id="CHEBI:48775"/>
        <note>ligand shared between dimeric partners</note>
    </ligand>
</feature>
<feature type="binding site" evidence="2">
    <location>
        <position position="59"/>
    </location>
    <ligand>
        <name>Cd(2+)</name>
        <dbReference type="ChEBI" id="CHEBI:48775"/>
        <note>ligand shared between dimeric partners</note>
    </ligand>
</feature>
<name>CADC_LISMN</name>
<sequence length="119" mass="13489">MTVDICEITCIDEEKVKRVKTGLETVEVTTISQIFKILSDETRVKIVYALLTENELCVCDLANIVEATVAATSHHLRFLKKQGIANYRKDGKLVYYSLANERVRDRIKLILLNFEGVGV</sequence>